<sequence length="517" mass="58304">MLHMILSQRVILLRKYHSSANALVTKSPNSIPELVKHIDSDLIRNAHKVFDEIPELDVISATAVIGRFVKESRHVEASQAFKRLLCLGIRPNEFTFGTVIGSSTTSRDVKLGKQLHCYALKMGLASNVFVGSAVLNCYVKLSTLTDARRCFDDTRDPNVVSITNLISGYLKKHEFEEALSLFRAMPERSVVTWNAVIGGFSQTGRNEEAVNTFVDMLREGVVIPNESTFPCAITAISNIASHGAGKSIHACAIKFLGKRFNVFVWNSLISFYSKCGNMEDSLLAFNKLEEEQRNIVSWNSMIWGYAHNGRGEEAVAMFEKMVKDTNLRPNNVTILGVLFACNHAGLIQEGYMYFNKAVNDYDDPNLLELEHYACMVDMLSRSGRFKEAEELIKSMPLDPGIGFWKALLGGCQIHSNKRLAKLAASKILELDPRDVSSYVMLSNAYSAMENWQNVSLIRRKMKETGLKRFTGCSWIEVRDQIRVFVNADKNNELKDEVYRMLALVSQHLEENECWKDL</sequence>
<reference key="1">
    <citation type="journal article" date="1998" name="DNA Res.">
        <title>Structural analysis of Arabidopsis thaliana chromosome 5. VIII. Sequence features of the regions of 1,081,958 bp covered by seventeen physically assigned P1 and TAC clones.</title>
        <authorList>
            <person name="Asamizu E."/>
            <person name="Sato S."/>
            <person name="Kaneko T."/>
            <person name="Nakamura Y."/>
            <person name="Kotani H."/>
            <person name="Miyajima N."/>
            <person name="Tabata S."/>
        </authorList>
    </citation>
    <scope>NUCLEOTIDE SEQUENCE [LARGE SCALE GENOMIC DNA]</scope>
    <source>
        <strain>cv. Columbia</strain>
    </source>
</reference>
<reference key="2">
    <citation type="journal article" date="2017" name="Plant J.">
        <title>Araport11: a complete reannotation of the Arabidopsis thaliana reference genome.</title>
        <authorList>
            <person name="Cheng C.Y."/>
            <person name="Krishnakumar V."/>
            <person name="Chan A.P."/>
            <person name="Thibaud-Nissen F."/>
            <person name="Schobel S."/>
            <person name="Town C.D."/>
        </authorList>
    </citation>
    <scope>GENOME REANNOTATION</scope>
    <source>
        <strain>cv. Columbia</strain>
    </source>
</reference>
<reference key="3">
    <citation type="journal article" date="2002" name="Science">
        <title>Functional annotation of a full-length Arabidopsis cDNA collection.</title>
        <authorList>
            <person name="Seki M."/>
            <person name="Narusaka M."/>
            <person name="Kamiya A."/>
            <person name="Ishida J."/>
            <person name="Satou M."/>
            <person name="Sakurai T."/>
            <person name="Nakajima M."/>
            <person name="Enju A."/>
            <person name="Akiyama K."/>
            <person name="Oono Y."/>
            <person name="Muramatsu M."/>
            <person name="Hayashizaki Y."/>
            <person name="Kawai J."/>
            <person name="Carninci P."/>
            <person name="Itoh M."/>
            <person name="Ishii Y."/>
            <person name="Arakawa T."/>
            <person name="Shibata K."/>
            <person name="Shinagawa A."/>
            <person name="Shinozaki K."/>
        </authorList>
    </citation>
    <scope>NUCLEOTIDE SEQUENCE [LARGE SCALE MRNA] OF 117-517</scope>
    <source>
        <strain>cv. Columbia</strain>
    </source>
</reference>
<reference key="4">
    <citation type="journal article" date="2004" name="Plant Cell">
        <title>Genome-wide analysis of Arabidopsis pentatricopeptide repeat proteins reveals their essential role in organelle biogenesis.</title>
        <authorList>
            <person name="Lurin C."/>
            <person name="Andres C."/>
            <person name="Aubourg S."/>
            <person name="Bellaoui M."/>
            <person name="Bitton F."/>
            <person name="Bruyere C."/>
            <person name="Caboche M."/>
            <person name="Debast C."/>
            <person name="Gualberto J."/>
            <person name="Hoffmann B."/>
            <person name="Lecharny A."/>
            <person name="Le Ret M."/>
            <person name="Martin-Magniette M.-L."/>
            <person name="Mireau H."/>
            <person name="Peeters N."/>
            <person name="Renou J.-P."/>
            <person name="Szurek B."/>
            <person name="Taconnat L."/>
            <person name="Small I."/>
        </authorList>
    </citation>
    <scope>GENE FAMILY</scope>
</reference>
<comment type="subcellular location">
    <subcellularLocation>
        <location evidence="2">Mitochondrion</location>
    </subcellularLocation>
</comment>
<comment type="similarity">
    <text evidence="2">Belongs to the PPR family. PCMP-E subfamily.</text>
</comment>
<comment type="sequence caution" evidence="2">
    <conflict type="frameshift">
        <sequence resource="EMBL-CDS" id="BAC43595"/>
    </conflict>
</comment>
<comment type="online information" name="Pentatricopeptide repeat proteins">
    <link uri="https://ppr.plantenergy.uwa.edu.au"/>
</comment>
<dbReference type="EMBL" id="AB016888">
    <property type="protein sequence ID" value="BAB10486.1"/>
    <property type="molecule type" value="Genomic_DNA"/>
</dbReference>
<dbReference type="EMBL" id="CP002688">
    <property type="protein sequence ID" value="AED94812.1"/>
    <property type="molecule type" value="Genomic_DNA"/>
</dbReference>
<dbReference type="EMBL" id="AK119019">
    <property type="protein sequence ID" value="BAC43595.1"/>
    <property type="status" value="ALT_SEQ"/>
    <property type="molecule type" value="mRNA"/>
</dbReference>
<dbReference type="RefSeq" id="NP_199060.3">
    <property type="nucleotide sequence ID" value="NM_123610.4"/>
</dbReference>
<dbReference type="SMR" id="Q9FIH2"/>
<dbReference type="FunCoup" id="Q9FIH2">
    <property type="interactions" value="267"/>
</dbReference>
<dbReference type="STRING" id="3702.Q9FIH2"/>
<dbReference type="iPTMnet" id="Q9FIH2"/>
<dbReference type="PaxDb" id="3702-AT5G42450.1"/>
<dbReference type="ProteomicsDB" id="249295"/>
<dbReference type="EnsemblPlants" id="AT5G42450.1">
    <property type="protein sequence ID" value="AT5G42450.1"/>
    <property type="gene ID" value="AT5G42450"/>
</dbReference>
<dbReference type="GeneID" id="834252"/>
<dbReference type="Gramene" id="AT5G42450.1">
    <property type="protein sequence ID" value="AT5G42450.1"/>
    <property type="gene ID" value="AT5G42450"/>
</dbReference>
<dbReference type="KEGG" id="ath:AT5G42450"/>
<dbReference type="Araport" id="AT5G42450"/>
<dbReference type="TAIR" id="AT5G42450"/>
<dbReference type="eggNOG" id="KOG4197">
    <property type="taxonomic scope" value="Eukaryota"/>
</dbReference>
<dbReference type="HOGENOM" id="CLU_002706_0_2_1"/>
<dbReference type="InParanoid" id="Q9FIH2"/>
<dbReference type="OMA" id="FNGDCRH"/>
<dbReference type="PhylomeDB" id="Q9FIH2"/>
<dbReference type="PRO" id="PR:Q9FIH2"/>
<dbReference type="Proteomes" id="UP000006548">
    <property type="component" value="Chromosome 5"/>
</dbReference>
<dbReference type="ExpressionAtlas" id="Q9FIH2">
    <property type="expression patterns" value="baseline and differential"/>
</dbReference>
<dbReference type="GO" id="GO:0005739">
    <property type="term" value="C:mitochondrion"/>
    <property type="evidence" value="ECO:0007669"/>
    <property type="project" value="UniProtKB-SubCell"/>
</dbReference>
<dbReference type="GO" id="GO:0003723">
    <property type="term" value="F:RNA binding"/>
    <property type="evidence" value="ECO:0007669"/>
    <property type="project" value="InterPro"/>
</dbReference>
<dbReference type="GO" id="GO:0009451">
    <property type="term" value="P:RNA modification"/>
    <property type="evidence" value="ECO:0007669"/>
    <property type="project" value="InterPro"/>
</dbReference>
<dbReference type="FunFam" id="1.25.40.10:FF:002366">
    <property type="entry name" value="Pentatricopeptide repeat-containing protein At5g42450, mitochondrial"/>
    <property type="match status" value="1"/>
</dbReference>
<dbReference type="FunFam" id="1.25.40.10:FF:000719">
    <property type="entry name" value="Pentatricopeptide repeat-containing protein mitochondrial"/>
    <property type="match status" value="1"/>
</dbReference>
<dbReference type="FunFam" id="1.25.40.10:FF:000144">
    <property type="entry name" value="Pentatricopeptide repeat-containing protein, mitochondrial"/>
    <property type="match status" value="1"/>
</dbReference>
<dbReference type="Gene3D" id="1.25.40.10">
    <property type="entry name" value="Tetratricopeptide repeat domain"/>
    <property type="match status" value="4"/>
</dbReference>
<dbReference type="InterPro" id="IPR046848">
    <property type="entry name" value="E_motif"/>
</dbReference>
<dbReference type="InterPro" id="IPR002885">
    <property type="entry name" value="Pentatricopeptide_rpt"/>
</dbReference>
<dbReference type="InterPro" id="IPR046960">
    <property type="entry name" value="PPR_At4g14850-like_plant"/>
</dbReference>
<dbReference type="InterPro" id="IPR011990">
    <property type="entry name" value="TPR-like_helical_dom_sf"/>
</dbReference>
<dbReference type="NCBIfam" id="TIGR00756">
    <property type="entry name" value="PPR"/>
    <property type="match status" value="4"/>
</dbReference>
<dbReference type="PANTHER" id="PTHR47926">
    <property type="entry name" value="PENTATRICOPEPTIDE REPEAT-CONTAINING PROTEIN"/>
    <property type="match status" value="1"/>
</dbReference>
<dbReference type="PANTHER" id="PTHR47926:SF357">
    <property type="entry name" value="PENTATRICOPEPTIDE REPEAT-CONTAINING PROTEIN"/>
    <property type="match status" value="1"/>
</dbReference>
<dbReference type="Pfam" id="PF20431">
    <property type="entry name" value="E_motif"/>
    <property type="match status" value="1"/>
</dbReference>
<dbReference type="Pfam" id="PF01535">
    <property type="entry name" value="PPR"/>
    <property type="match status" value="2"/>
</dbReference>
<dbReference type="Pfam" id="PF13041">
    <property type="entry name" value="PPR_2"/>
    <property type="match status" value="2"/>
</dbReference>
<dbReference type="SUPFAM" id="SSF48452">
    <property type="entry name" value="TPR-like"/>
    <property type="match status" value="1"/>
</dbReference>
<dbReference type="PROSITE" id="PS51375">
    <property type="entry name" value="PPR"/>
    <property type="match status" value="9"/>
</dbReference>
<proteinExistence type="evidence at transcript level"/>
<gene>
    <name type="primary">PCMP-E102</name>
    <name type="ordered locus">At5g42450</name>
    <name type="ORF">MDH9.15</name>
</gene>
<protein>
    <recommendedName>
        <fullName>Pentatricopeptide repeat-containing protein At5g42450, mitochondrial</fullName>
    </recommendedName>
</protein>
<evidence type="ECO:0000255" key="1"/>
<evidence type="ECO:0000305" key="2"/>
<accession>Q9FIH2</accession>
<accession>Q8GW82</accession>
<feature type="transit peptide" description="Mitochondrion" evidence="1">
    <location>
        <begin position="1"/>
        <end position="23"/>
    </location>
</feature>
<feature type="chain" id="PRO_0000363551" description="Pentatricopeptide repeat-containing protein At5g42450, mitochondrial">
    <location>
        <begin position="24"/>
        <end position="517"/>
    </location>
</feature>
<feature type="repeat" description="PPR 1">
    <location>
        <begin position="57"/>
        <end position="91"/>
    </location>
</feature>
<feature type="repeat" description="PPR 2">
    <location>
        <begin position="92"/>
        <end position="126"/>
    </location>
</feature>
<feature type="repeat" description="PPR 3">
    <location>
        <begin position="127"/>
        <end position="157"/>
    </location>
</feature>
<feature type="repeat" description="PPR 4">
    <location>
        <begin position="158"/>
        <end position="188"/>
    </location>
</feature>
<feature type="repeat" description="PPR 5">
    <location>
        <begin position="189"/>
        <end position="223"/>
    </location>
</feature>
<feature type="repeat" description="PPR 6">
    <location>
        <begin position="225"/>
        <end position="259"/>
    </location>
</feature>
<feature type="repeat" description="PPR 7">
    <location>
        <begin position="261"/>
        <end position="291"/>
    </location>
</feature>
<feature type="repeat" description="PPR 8">
    <location>
        <begin position="294"/>
        <end position="329"/>
    </location>
</feature>
<feature type="repeat" description="PPR 9">
    <location>
        <begin position="368"/>
        <end position="398"/>
    </location>
</feature>
<feature type="region of interest" description="Type E motif">
    <location>
        <begin position="403"/>
        <end position="478"/>
    </location>
</feature>
<feature type="region of interest" description="Type E(+) motif">
    <location>
        <begin position="479"/>
        <end position="509"/>
    </location>
</feature>
<feature type="sequence conflict" description="In Ref. 3; BAC43595." evidence="2" ref="3">
    <original>H</original>
    <variation>R</variation>
    <location>
        <position position="242"/>
    </location>
</feature>
<feature type="sequence conflict" description="In Ref. 3; BAC43595." evidence="2" ref="3">
    <original>E</original>
    <variation>G</variation>
    <location>
        <position position="279"/>
    </location>
</feature>
<feature type="sequence conflict" description="In Ref. 3; BAC43595." evidence="2" ref="3">
    <original>G</original>
    <variation>D</variation>
    <location>
        <position position="383"/>
    </location>
</feature>
<keyword id="KW-0496">Mitochondrion</keyword>
<keyword id="KW-1185">Reference proteome</keyword>
<keyword id="KW-0677">Repeat</keyword>
<keyword id="KW-0809">Transit peptide</keyword>
<name>PP414_ARATH</name>
<organism>
    <name type="scientific">Arabidopsis thaliana</name>
    <name type="common">Mouse-ear cress</name>
    <dbReference type="NCBI Taxonomy" id="3702"/>
    <lineage>
        <taxon>Eukaryota</taxon>
        <taxon>Viridiplantae</taxon>
        <taxon>Streptophyta</taxon>
        <taxon>Embryophyta</taxon>
        <taxon>Tracheophyta</taxon>
        <taxon>Spermatophyta</taxon>
        <taxon>Magnoliopsida</taxon>
        <taxon>eudicotyledons</taxon>
        <taxon>Gunneridae</taxon>
        <taxon>Pentapetalae</taxon>
        <taxon>rosids</taxon>
        <taxon>malvids</taxon>
        <taxon>Brassicales</taxon>
        <taxon>Brassicaceae</taxon>
        <taxon>Camelineae</taxon>
        <taxon>Arabidopsis</taxon>
    </lineage>
</organism>